<protein>
    <recommendedName>
        <fullName evidence="1">Adenosylhomocysteinase</fullName>
        <ecNumber evidence="1">3.13.2.1</ecNumber>
    </recommendedName>
    <alternativeName>
        <fullName evidence="1">S-adenosyl-L-homocysteine hydrolase</fullName>
        <shortName evidence="1">AdoHcyase</shortName>
    </alternativeName>
</protein>
<organism>
    <name type="scientific">Mycobacterium leprae (strain Br4923)</name>
    <dbReference type="NCBI Taxonomy" id="561304"/>
    <lineage>
        <taxon>Bacteria</taxon>
        <taxon>Bacillati</taxon>
        <taxon>Actinomycetota</taxon>
        <taxon>Actinomycetes</taxon>
        <taxon>Mycobacteriales</taxon>
        <taxon>Mycobacteriaceae</taxon>
        <taxon>Mycobacterium</taxon>
    </lineage>
</organism>
<name>SAHH_MYCLB</name>
<proteinExistence type="inferred from homology"/>
<feature type="chain" id="PRO_1000196673" description="Adenosylhomocysteinase">
    <location>
        <begin position="1"/>
        <end position="492"/>
    </location>
</feature>
<feature type="binding site" evidence="1">
    <location>
        <position position="68"/>
    </location>
    <ligand>
        <name>substrate</name>
    </ligand>
</feature>
<feature type="binding site" evidence="1">
    <location>
        <position position="153"/>
    </location>
    <ligand>
        <name>substrate</name>
    </ligand>
</feature>
<feature type="binding site" evidence="1">
    <location>
        <position position="215"/>
    </location>
    <ligand>
        <name>substrate</name>
    </ligand>
</feature>
<feature type="binding site" evidence="1">
    <location>
        <begin position="216"/>
        <end position="218"/>
    </location>
    <ligand>
        <name>NAD(+)</name>
        <dbReference type="ChEBI" id="CHEBI:57540"/>
    </ligand>
</feature>
<feature type="binding site" evidence="1">
    <location>
        <position position="245"/>
    </location>
    <ligand>
        <name>substrate</name>
    </ligand>
</feature>
<feature type="binding site" evidence="1">
    <location>
        <position position="249"/>
    </location>
    <ligand>
        <name>substrate</name>
    </ligand>
</feature>
<feature type="binding site" evidence="1">
    <location>
        <position position="250"/>
    </location>
    <ligand>
        <name>NAD(+)</name>
        <dbReference type="ChEBI" id="CHEBI:57540"/>
    </ligand>
</feature>
<feature type="binding site" evidence="1">
    <location>
        <begin position="279"/>
        <end position="284"/>
    </location>
    <ligand>
        <name>NAD(+)</name>
        <dbReference type="ChEBI" id="CHEBI:57540"/>
    </ligand>
</feature>
<feature type="binding site" evidence="1">
    <location>
        <position position="302"/>
    </location>
    <ligand>
        <name>NAD(+)</name>
        <dbReference type="ChEBI" id="CHEBI:57540"/>
    </ligand>
</feature>
<feature type="binding site" evidence="1">
    <location>
        <position position="337"/>
    </location>
    <ligand>
        <name>NAD(+)</name>
        <dbReference type="ChEBI" id="CHEBI:57540"/>
    </ligand>
</feature>
<feature type="binding site" evidence="1">
    <location>
        <begin position="358"/>
        <end position="360"/>
    </location>
    <ligand>
        <name>NAD(+)</name>
        <dbReference type="ChEBI" id="CHEBI:57540"/>
    </ligand>
</feature>
<feature type="binding site" evidence="1">
    <location>
        <position position="406"/>
    </location>
    <ligand>
        <name>NAD(+)</name>
        <dbReference type="ChEBI" id="CHEBI:57540"/>
    </ligand>
</feature>
<accession>B8ZQE9</accession>
<reference key="1">
    <citation type="journal article" date="2009" name="Nat. Genet.">
        <title>Comparative genomic and phylogeographic analysis of Mycobacterium leprae.</title>
        <authorList>
            <person name="Monot M."/>
            <person name="Honore N."/>
            <person name="Garnier T."/>
            <person name="Zidane N."/>
            <person name="Sherafi D."/>
            <person name="Paniz-Mondolfi A."/>
            <person name="Matsuoka M."/>
            <person name="Taylor G.M."/>
            <person name="Donoghue H.D."/>
            <person name="Bouwman A."/>
            <person name="Mays S."/>
            <person name="Watson C."/>
            <person name="Lockwood D."/>
            <person name="Khamispour A."/>
            <person name="Dowlati Y."/>
            <person name="Jianping S."/>
            <person name="Rea T.H."/>
            <person name="Vera-Cabrera L."/>
            <person name="Stefani M.M."/>
            <person name="Banu S."/>
            <person name="Macdonald M."/>
            <person name="Sapkota B.R."/>
            <person name="Spencer J.S."/>
            <person name="Thomas J."/>
            <person name="Harshman K."/>
            <person name="Singh P."/>
            <person name="Busso P."/>
            <person name="Gattiker A."/>
            <person name="Rougemont J."/>
            <person name="Brennan P.J."/>
            <person name="Cole S.T."/>
        </authorList>
    </citation>
    <scope>NUCLEOTIDE SEQUENCE [LARGE SCALE GENOMIC DNA]</scope>
    <source>
        <strain>Br4923</strain>
    </source>
</reference>
<dbReference type="EC" id="3.13.2.1" evidence="1"/>
<dbReference type="EMBL" id="FM211192">
    <property type="protein sequence ID" value="CAR70865.1"/>
    <property type="molecule type" value="Genomic_DNA"/>
</dbReference>
<dbReference type="SMR" id="B8ZQE9"/>
<dbReference type="KEGG" id="mlb:MLBr00771"/>
<dbReference type="HOGENOM" id="CLU_025194_2_1_11"/>
<dbReference type="UniPathway" id="UPA00314">
    <property type="reaction ID" value="UER00076"/>
</dbReference>
<dbReference type="Proteomes" id="UP000006900">
    <property type="component" value="Chromosome"/>
</dbReference>
<dbReference type="GO" id="GO:0005829">
    <property type="term" value="C:cytosol"/>
    <property type="evidence" value="ECO:0007669"/>
    <property type="project" value="TreeGrafter"/>
</dbReference>
<dbReference type="GO" id="GO:0004013">
    <property type="term" value="F:adenosylhomocysteinase activity"/>
    <property type="evidence" value="ECO:0007669"/>
    <property type="project" value="UniProtKB-UniRule"/>
</dbReference>
<dbReference type="GO" id="GO:0071269">
    <property type="term" value="P:L-homocysteine biosynthetic process"/>
    <property type="evidence" value="ECO:0007669"/>
    <property type="project" value="UniProtKB-UniRule"/>
</dbReference>
<dbReference type="GO" id="GO:0006730">
    <property type="term" value="P:one-carbon metabolic process"/>
    <property type="evidence" value="ECO:0007669"/>
    <property type="project" value="UniProtKB-KW"/>
</dbReference>
<dbReference type="GO" id="GO:0033353">
    <property type="term" value="P:S-adenosylmethionine cycle"/>
    <property type="evidence" value="ECO:0007669"/>
    <property type="project" value="TreeGrafter"/>
</dbReference>
<dbReference type="CDD" id="cd00401">
    <property type="entry name" value="SAHH"/>
    <property type="match status" value="1"/>
</dbReference>
<dbReference type="FunFam" id="3.40.50.720:FF:000004">
    <property type="entry name" value="Adenosylhomocysteinase"/>
    <property type="match status" value="1"/>
</dbReference>
<dbReference type="Gene3D" id="3.40.50.1480">
    <property type="entry name" value="Adenosylhomocysteinase-like"/>
    <property type="match status" value="1"/>
</dbReference>
<dbReference type="Gene3D" id="3.40.50.720">
    <property type="entry name" value="NAD(P)-binding Rossmann-like Domain"/>
    <property type="match status" value="1"/>
</dbReference>
<dbReference type="HAMAP" id="MF_00563">
    <property type="entry name" value="AdoHcyase"/>
    <property type="match status" value="1"/>
</dbReference>
<dbReference type="InterPro" id="IPR042172">
    <property type="entry name" value="Adenosylhomocyst_ase-like_sf"/>
</dbReference>
<dbReference type="InterPro" id="IPR000043">
    <property type="entry name" value="Adenosylhomocysteinase-like"/>
</dbReference>
<dbReference type="InterPro" id="IPR015878">
    <property type="entry name" value="Ado_hCys_hydrolase_NAD-bd"/>
</dbReference>
<dbReference type="InterPro" id="IPR036291">
    <property type="entry name" value="NAD(P)-bd_dom_sf"/>
</dbReference>
<dbReference type="InterPro" id="IPR020082">
    <property type="entry name" value="S-Ado-L-homoCys_hydrolase_CS"/>
</dbReference>
<dbReference type="NCBIfam" id="TIGR00936">
    <property type="entry name" value="ahcY"/>
    <property type="match status" value="1"/>
</dbReference>
<dbReference type="NCBIfam" id="NF004005">
    <property type="entry name" value="PRK05476.2-3"/>
    <property type="match status" value="1"/>
</dbReference>
<dbReference type="PANTHER" id="PTHR23420">
    <property type="entry name" value="ADENOSYLHOMOCYSTEINASE"/>
    <property type="match status" value="1"/>
</dbReference>
<dbReference type="PANTHER" id="PTHR23420:SF0">
    <property type="entry name" value="ADENOSYLHOMOCYSTEINASE"/>
    <property type="match status" value="1"/>
</dbReference>
<dbReference type="Pfam" id="PF05221">
    <property type="entry name" value="AdoHcyase"/>
    <property type="match status" value="1"/>
</dbReference>
<dbReference type="Pfam" id="PF00670">
    <property type="entry name" value="AdoHcyase_NAD"/>
    <property type="match status" value="1"/>
</dbReference>
<dbReference type="PIRSF" id="PIRSF001109">
    <property type="entry name" value="Ad_hcy_hydrolase"/>
    <property type="match status" value="1"/>
</dbReference>
<dbReference type="SMART" id="SM00996">
    <property type="entry name" value="AdoHcyase"/>
    <property type="match status" value="1"/>
</dbReference>
<dbReference type="SMART" id="SM00997">
    <property type="entry name" value="AdoHcyase_NAD"/>
    <property type="match status" value="1"/>
</dbReference>
<dbReference type="SUPFAM" id="SSF52283">
    <property type="entry name" value="Formate/glycerate dehydrogenase catalytic domain-like"/>
    <property type="match status" value="1"/>
</dbReference>
<dbReference type="SUPFAM" id="SSF51735">
    <property type="entry name" value="NAD(P)-binding Rossmann-fold domains"/>
    <property type="match status" value="1"/>
</dbReference>
<dbReference type="PROSITE" id="PS00738">
    <property type="entry name" value="ADOHCYASE_1"/>
    <property type="match status" value="1"/>
</dbReference>
<dbReference type="PROSITE" id="PS00739">
    <property type="entry name" value="ADOHCYASE_2"/>
    <property type="match status" value="1"/>
</dbReference>
<gene>
    <name evidence="1" type="primary">ahcY</name>
    <name type="ordered locus">MLBr00771</name>
</gene>
<sequence>MTTTENSLMPDVRNGIDFKVADLSLANFGRKELDLAEYEMPGLMSLRHEYAEVQPLKGARISGSLHMTVQTAVLIETLTALGAEVRWASCNIFSTQDHAAAAVVVGPYGTPEEPKGVPVFAWKGETLEEYWWAAEQMLTWPDPDKPVNMILDDGGDATMLVLRGVQYEKAGVVPPAEVDDSAEWKVFLNLLRKRFETDKGKWTKIAKSVKGVTEETTTGVLRLYQFAAAGDLAFPAINVNDSVTKSKFDNKYGTRHSLIDGINRGTDSLIGGKNVLICGYGDVGKGCAEAAKGQGARVTITEIDPINALQALMEGFDVKRVEDVIADSDIVVTATGNKDIILLEHMKAMKDHAILGNIGHFDNEIDMAALERSGATRLNIKPQVDLWTFGDSGKSIIVLSEGRLLNLGNATGHPSFVMSNSFANQTIAQIELWTKNDDYDNEVYRLPKHLDEKVARVHVEALGGQLTKLTKDQAEYLGVDVDGPFKPDHYRY</sequence>
<keyword id="KW-0963">Cytoplasm</keyword>
<keyword id="KW-0378">Hydrolase</keyword>
<keyword id="KW-0520">NAD</keyword>
<keyword id="KW-0554">One-carbon metabolism</keyword>
<evidence type="ECO:0000255" key="1">
    <source>
        <dbReference type="HAMAP-Rule" id="MF_00563"/>
    </source>
</evidence>
<comment type="function">
    <text evidence="1">May play a key role in the regulation of the intracellular concentration of adenosylhomocysteine.</text>
</comment>
<comment type="catalytic activity">
    <reaction evidence="1">
        <text>S-adenosyl-L-homocysteine + H2O = L-homocysteine + adenosine</text>
        <dbReference type="Rhea" id="RHEA:21708"/>
        <dbReference type="ChEBI" id="CHEBI:15377"/>
        <dbReference type="ChEBI" id="CHEBI:16335"/>
        <dbReference type="ChEBI" id="CHEBI:57856"/>
        <dbReference type="ChEBI" id="CHEBI:58199"/>
        <dbReference type="EC" id="3.13.2.1"/>
    </reaction>
</comment>
<comment type="cofactor">
    <cofactor evidence="1">
        <name>NAD(+)</name>
        <dbReference type="ChEBI" id="CHEBI:57540"/>
    </cofactor>
    <text evidence="1">Binds 1 NAD(+) per subunit.</text>
</comment>
<comment type="pathway">
    <text evidence="1">Amino-acid biosynthesis; L-homocysteine biosynthesis; L-homocysteine from S-adenosyl-L-homocysteine: step 1/1.</text>
</comment>
<comment type="subcellular location">
    <subcellularLocation>
        <location evidence="1">Cytoplasm</location>
    </subcellularLocation>
</comment>
<comment type="similarity">
    <text evidence="1">Belongs to the adenosylhomocysteinase family.</text>
</comment>